<dbReference type="EMBL" id="CP000075">
    <property type="protein sequence ID" value="AAY38505.1"/>
    <property type="molecule type" value="Genomic_DNA"/>
</dbReference>
<dbReference type="RefSeq" id="WP_011268456.1">
    <property type="nucleotide sequence ID" value="NC_007005.1"/>
</dbReference>
<dbReference type="RefSeq" id="YP_236543.1">
    <property type="nucleotide sequence ID" value="NC_007005.1"/>
</dbReference>
<dbReference type="SMR" id="Q4ZQR7"/>
<dbReference type="STRING" id="205918.Psyr_3473"/>
<dbReference type="KEGG" id="psb:Psyr_3473"/>
<dbReference type="PATRIC" id="fig|205918.7.peg.3558"/>
<dbReference type="eggNOG" id="COG1706">
    <property type="taxonomic scope" value="Bacteria"/>
</dbReference>
<dbReference type="HOGENOM" id="CLU_045235_1_0_6"/>
<dbReference type="OrthoDB" id="9786431at2"/>
<dbReference type="Proteomes" id="UP000000426">
    <property type="component" value="Chromosome"/>
</dbReference>
<dbReference type="GO" id="GO:0009428">
    <property type="term" value="C:bacterial-type flagellum basal body, distal rod, P ring"/>
    <property type="evidence" value="ECO:0007669"/>
    <property type="project" value="InterPro"/>
</dbReference>
<dbReference type="GO" id="GO:0030288">
    <property type="term" value="C:outer membrane-bounded periplasmic space"/>
    <property type="evidence" value="ECO:0007669"/>
    <property type="project" value="InterPro"/>
</dbReference>
<dbReference type="GO" id="GO:0005198">
    <property type="term" value="F:structural molecule activity"/>
    <property type="evidence" value="ECO:0007669"/>
    <property type="project" value="InterPro"/>
</dbReference>
<dbReference type="GO" id="GO:0071973">
    <property type="term" value="P:bacterial-type flagellum-dependent cell motility"/>
    <property type="evidence" value="ECO:0007669"/>
    <property type="project" value="InterPro"/>
</dbReference>
<dbReference type="HAMAP" id="MF_00416">
    <property type="entry name" value="FlgI"/>
    <property type="match status" value="1"/>
</dbReference>
<dbReference type="InterPro" id="IPR001782">
    <property type="entry name" value="Flag_FlgI"/>
</dbReference>
<dbReference type="NCBIfam" id="NF003676">
    <property type="entry name" value="PRK05303.1"/>
    <property type="match status" value="1"/>
</dbReference>
<dbReference type="PANTHER" id="PTHR30381">
    <property type="entry name" value="FLAGELLAR P-RING PERIPLASMIC PROTEIN FLGI"/>
    <property type="match status" value="1"/>
</dbReference>
<dbReference type="PANTHER" id="PTHR30381:SF0">
    <property type="entry name" value="FLAGELLAR P-RING PROTEIN"/>
    <property type="match status" value="1"/>
</dbReference>
<dbReference type="Pfam" id="PF02119">
    <property type="entry name" value="FlgI"/>
    <property type="match status" value="1"/>
</dbReference>
<dbReference type="PRINTS" id="PR01010">
    <property type="entry name" value="FLGPRINGFLGI"/>
</dbReference>
<feature type="signal peptide" evidence="1">
    <location>
        <begin position="1"/>
        <end position="22"/>
    </location>
</feature>
<feature type="chain" id="PRO_0000236313" description="Flagellar P-ring protein">
    <location>
        <begin position="23"/>
        <end position="369"/>
    </location>
</feature>
<comment type="function">
    <text evidence="1">Assembles around the rod to form the L-ring and probably protects the motor/basal body from shearing forces during rotation.</text>
</comment>
<comment type="subunit">
    <text evidence="1">The basal body constitutes a major portion of the flagellar organelle and consists of four rings (L,P,S, and M) mounted on a central rod.</text>
</comment>
<comment type="subcellular location">
    <subcellularLocation>
        <location evidence="1">Periplasm</location>
    </subcellularLocation>
    <subcellularLocation>
        <location evidence="1">Bacterial flagellum basal body</location>
    </subcellularLocation>
</comment>
<comment type="similarity">
    <text evidence="1">Belongs to the FlgI family.</text>
</comment>
<keyword id="KW-0975">Bacterial flagellum</keyword>
<keyword id="KW-0574">Periplasm</keyword>
<keyword id="KW-0732">Signal</keyword>
<organism>
    <name type="scientific">Pseudomonas syringae pv. syringae (strain B728a)</name>
    <dbReference type="NCBI Taxonomy" id="205918"/>
    <lineage>
        <taxon>Bacteria</taxon>
        <taxon>Pseudomonadati</taxon>
        <taxon>Pseudomonadota</taxon>
        <taxon>Gammaproteobacteria</taxon>
        <taxon>Pseudomonadales</taxon>
        <taxon>Pseudomonadaceae</taxon>
        <taxon>Pseudomonas</taxon>
        <taxon>Pseudomonas syringae</taxon>
    </lineage>
</organism>
<sequence>MIKLKQLIAATLLLSTAFGVHAERLKDIASISGVRANQLIGYGLVVGLNGTGDQTTQTPFTLQTFNNMLSQFGIKVPAGSGTVQLKNVAAVAVYADLPAFAKPGQTVDITVSSIGNSKSLRGGALLMTPMKGVDGNVYAIAQGNLVVGGFDAEGRDGSKITVNVPSSGRIPGGASVERSVPSGFNQGNTLTLNLNRSDFTTAKRIVDKINELLGPGVAQALDGGSVRVTAPLDPGQRVDYLSILENLEVDPGQTAAKVIINSRTGTIVIGQNVKVSPAAVTHGSLTVTITEDPIVSQPGALSGGQTAVVPRSRVNAQQELHPMFKFGPGTTLDEIVRAVNQVGAAPGDLMAILEALKQAGALQADLIVI</sequence>
<accession>Q4ZQR7</accession>
<evidence type="ECO:0000255" key="1">
    <source>
        <dbReference type="HAMAP-Rule" id="MF_00416"/>
    </source>
</evidence>
<gene>
    <name evidence="1" type="primary">flgI</name>
    <name type="ordered locus">Psyr_3473</name>
</gene>
<proteinExistence type="inferred from homology"/>
<name>FLGI_PSEU2</name>
<reference key="1">
    <citation type="journal article" date="2005" name="Proc. Natl. Acad. Sci. U.S.A.">
        <title>Comparison of the complete genome sequences of Pseudomonas syringae pv. syringae B728a and pv. tomato DC3000.</title>
        <authorList>
            <person name="Feil H."/>
            <person name="Feil W.S."/>
            <person name="Chain P."/>
            <person name="Larimer F."/>
            <person name="Dibartolo G."/>
            <person name="Copeland A."/>
            <person name="Lykidis A."/>
            <person name="Trong S."/>
            <person name="Nolan M."/>
            <person name="Goltsman E."/>
            <person name="Thiel J."/>
            <person name="Malfatti S."/>
            <person name="Loper J.E."/>
            <person name="Lapidus A."/>
            <person name="Detter J.C."/>
            <person name="Land M."/>
            <person name="Richardson P.M."/>
            <person name="Kyrpides N.C."/>
            <person name="Ivanova N."/>
            <person name="Lindow S.E."/>
        </authorList>
    </citation>
    <scope>NUCLEOTIDE SEQUENCE [LARGE SCALE GENOMIC DNA]</scope>
    <source>
        <strain>B728a</strain>
    </source>
</reference>
<protein>
    <recommendedName>
        <fullName evidence="1">Flagellar P-ring protein</fullName>
    </recommendedName>
    <alternativeName>
        <fullName evidence="1">Basal body P-ring protein</fullName>
    </alternativeName>
</protein>